<reference key="1">
    <citation type="submission" date="1997-06" db="EMBL/GenBank/DDBJ databases">
        <authorList>
            <person name="Noback M.A."/>
            <person name="Terpstra P."/>
            <person name="Holsappel S."/>
            <person name="Venema G."/>
            <person name="Bron S."/>
        </authorList>
    </citation>
    <scope>NUCLEOTIDE SEQUENCE [GENOMIC DNA]</scope>
    <source>
        <strain>168</strain>
    </source>
</reference>
<reference key="2">
    <citation type="journal article" date="1997" name="Nature">
        <title>The complete genome sequence of the Gram-positive bacterium Bacillus subtilis.</title>
        <authorList>
            <person name="Kunst F."/>
            <person name="Ogasawara N."/>
            <person name="Moszer I."/>
            <person name="Albertini A.M."/>
            <person name="Alloni G."/>
            <person name="Azevedo V."/>
            <person name="Bertero M.G."/>
            <person name="Bessieres P."/>
            <person name="Bolotin A."/>
            <person name="Borchert S."/>
            <person name="Borriss R."/>
            <person name="Boursier L."/>
            <person name="Brans A."/>
            <person name="Braun M."/>
            <person name="Brignell S.C."/>
            <person name="Bron S."/>
            <person name="Brouillet S."/>
            <person name="Bruschi C.V."/>
            <person name="Caldwell B."/>
            <person name="Capuano V."/>
            <person name="Carter N.M."/>
            <person name="Choi S.-K."/>
            <person name="Codani J.-J."/>
            <person name="Connerton I.F."/>
            <person name="Cummings N.J."/>
            <person name="Daniel R.A."/>
            <person name="Denizot F."/>
            <person name="Devine K.M."/>
            <person name="Duesterhoeft A."/>
            <person name="Ehrlich S.D."/>
            <person name="Emmerson P.T."/>
            <person name="Entian K.-D."/>
            <person name="Errington J."/>
            <person name="Fabret C."/>
            <person name="Ferrari E."/>
            <person name="Foulger D."/>
            <person name="Fritz C."/>
            <person name="Fujita M."/>
            <person name="Fujita Y."/>
            <person name="Fuma S."/>
            <person name="Galizzi A."/>
            <person name="Galleron N."/>
            <person name="Ghim S.-Y."/>
            <person name="Glaser P."/>
            <person name="Goffeau A."/>
            <person name="Golightly E.J."/>
            <person name="Grandi G."/>
            <person name="Guiseppi G."/>
            <person name="Guy B.J."/>
            <person name="Haga K."/>
            <person name="Haiech J."/>
            <person name="Harwood C.R."/>
            <person name="Henaut A."/>
            <person name="Hilbert H."/>
            <person name="Holsappel S."/>
            <person name="Hosono S."/>
            <person name="Hullo M.-F."/>
            <person name="Itaya M."/>
            <person name="Jones L.-M."/>
            <person name="Joris B."/>
            <person name="Karamata D."/>
            <person name="Kasahara Y."/>
            <person name="Klaerr-Blanchard M."/>
            <person name="Klein C."/>
            <person name="Kobayashi Y."/>
            <person name="Koetter P."/>
            <person name="Koningstein G."/>
            <person name="Krogh S."/>
            <person name="Kumano M."/>
            <person name="Kurita K."/>
            <person name="Lapidus A."/>
            <person name="Lardinois S."/>
            <person name="Lauber J."/>
            <person name="Lazarevic V."/>
            <person name="Lee S.-M."/>
            <person name="Levine A."/>
            <person name="Liu H."/>
            <person name="Masuda S."/>
            <person name="Mauel C."/>
            <person name="Medigue C."/>
            <person name="Medina N."/>
            <person name="Mellado R.P."/>
            <person name="Mizuno M."/>
            <person name="Moestl D."/>
            <person name="Nakai S."/>
            <person name="Noback M."/>
            <person name="Noone D."/>
            <person name="O'Reilly M."/>
            <person name="Ogawa K."/>
            <person name="Ogiwara A."/>
            <person name="Oudega B."/>
            <person name="Park S.-H."/>
            <person name="Parro V."/>
            <person name="Pohl T.M."/>
            <person name="Portetelle D."/>
            <person name="Porwollik S."/>
            <person name="Prescott A.M."/>
            <person name="Presecan E."/>
            <person name="Pujic P."/>
            <person name="Purnelle B."/>
            <person name="Rapoport G."/>
            <person name="Rey M."/>
            <person name="Reynolds S."/>
            <person name="Rieger M."/>
            <person name="Rivolta C."/>
            <person name="Rocha E."/>
            <person name="Roche B."/>
            <person name="Rose M."/>
            <person name="Sadaie Y."/>
            <person name="Sato T."/>
            <person name="Scanlan E."/>
            <person name="Schleich S."/>
            <person name="Schroeter R."/>
            <person name="Scoffone F."/>
            <person name="Sekiguchi J."/>
            <person name="Sekowska A."/>
            <person name="Seror S.J."/>
            <person name="Serror P."/>
            <person name="Shin B.-S."/>
            <person name="Soldo B."/>
            <person name="Sorokin A."/>
            <person name="Tacconi E."/>
            <person name="Takagi T."/>
            <person name="Takahashi H."/>
            <person name="Takemaru K."/>
            <person name="Takeuchi M."/>
            <person name="Tamakoshi A."/>
            <person name="Tanaka T."/>
            <person name="Terpstra P."/>
            <person name="Tognoni A."/>
            <person name="Tosato V."/>
            <person name="Uchiyama S."/>
            <person name="Vandenbol M."/>
            <person name="Vannier F."/>
            <person name="Vassarotti A."/>
            <person name="Viari A."/>
            <person name="Wambutt R."/>
            <person name="Wedler E."/>
            <person name="Wedler H."/>
            <person name="Weitzenegger T."/>
            <person name="Winters P."/>
            <person name="Wipat A."/>
            <person name="Yamamoto H."/>
            <person name="Yamane K."/>
            <person name="Yasumoto K."/>
            <person name="Yata K."/>
            <person name="Yoshida K."/>
            <person name="Yoshikawa H.-F."/>
            <person name="Zumstein E."/>
            <person name="Yoshikawa H."/>
            <person name="Danchin A."/>
        </authorList>
    </citation>
    <scope>NUCLEOTIDE SEQUENCE [LARGE SCALE GENOMIC DNA]</scope>
    <source>
        <strain>168</strain>
    </source>
</reference>
<reference key="3">
    <citation type="submission" date="2005-01" db="PDB data bank">
        <title>The structural study of hypothetical protein yhfP.</title>
        <authorList>
            <consortium name="New York structural genomix research consortium (NYSGXRC)"/>
        </authorList>
    </citation>
    <scope>X-RAY CRYSTALLOGRAPHY (2.7 ANGSTROMS) IN COMPLEX WITH NAD</scope>
    <scope>SUBUNIT</scope>
</reference>
<organism>
    <name type="scientific">Bacillus subtilis (strain 168)</name>
    <dbReference type="NCBI Taxonomy" id="224308"/>
    <lineage>
        <taxon>Bacteria</taxon>
        <taxon>Bacillati</taxon>
        <taxon>Bacillota</taxon>
        <taxon>Bacilli</taxon>
        <taxon>Bacillales</taxon>
        <taxon>Bacillaceae</taxon>
        <taxon>Bacillus</taxon>
    </lineage>
</organism>
<dbReference type="EC" id="1.6.5.-"/>
<dbReference type="EMBL" id="Y14084">
    <property type="protein sequence ID" value="CAA74539.1"/>
    <property type="molecule type" value="Genomic_DNA"/>
</dbReference>
<dbReference type="EMBL" id="AL009126">
    <property type="protein sequence ID" value="CAB12872.1"/>
    <property type="molecule type" value="Genomic_DNA"/>
</dbReference>
<dbReference type="PIR" id="E69831">
    <property type="entry name" value="E69831"/>
</dbReference>
<dbReference type="RefSeq" id="NP_388913.1">
    <property type="nucleotide sequence ID" value="NC_000964.3"/>
</dbReference>
<dbReference type="RefSeq" id="WP_003233163.1">
    <property type="nucleotide sequence ID" value="NZ_OZ025638.1"/>
</dbReference>
<dbReference type="PDB" id="1TT7">
    <property type="method" value="X-ray"/>
    <property type="resolution" value="2.70 A"/>
    <property type="chains" value="A/B/C/D/E/F=1-330"/>
</dbReference>
<dbReference type="PDB" id="1Y9E">
    <property type="method" value="X-ray"/>
    <property type="resolution" value="2.80 A"/>
    <property type="chains" value="A/B/C/D/E/F=1-330"/>
</dbReference>
<dbReference type="PDBsum" id="1TT7"/>
<dbReference type="PDBsum" id="1Y9E"/>
<dbReference type="SMR" id="O07615"/>
<dbReference type="FunCoup" id="O07615">
    <property type="interactions" value="67"/>
</dbReference>
<dbReference type="STRING" id="224308.BSU10320"/>
<dbReference type="PaxDb" id="224308-BSU10320"/>
<dbReference type="DNASU" id="939312"/>
<dbReference type="EnsemblBacteria" id="CAB12872">
    <property type="protein sequence ID" value="CAB12872"/>
    <property type="gene ID" value="BSU_10320"/>
</dbReference>
<dbReference type="GeneID" id="939312"/>
<dbReference type="KEGG" id="bsu:BSU10320"/>
<dbReference type="PATRIC" id="fig|224308.179.peg.1109"/>
<dbReference type="eggNOG" id="COG0604">
    <property type="taxonomic scope" value="Bacteria"/>
</dbReference>
<dbReference type="InParanoid" id="O07615"/>
<dbReference type="OrthoDB" id="9782155at2"/>
<dbReference type="PhylomeDB" id="O07615"/>
<dbReference type="BioCyc" id="BSUB:BSU10320-MONOMER"/>
<dbReference type="EvolutionaryTrace" id="O07615"/>
<dbReference type="Proteomes" id="UP000001570">
    <property type="component" value="Chromosome"/>
</dbReference>
<dbReference type="GO" id="GO:0005737">
    <property type="term" value="C:cytoplasm"/>
    <property type="evidence" value="ECO:0007669"/>
    <property type="project" value="UniProtKB-SubCell"/>
</dbReference>
<dbReference type="GO" id="GO:0043957">
    <property type="term" value="F:acryloyl-CoA reductase (NADPH) activity"/>
    <property type="evidence" value="ECO:0000318"/>
    <property type="project" value="GO_Central"/>
</dbReference>
<dbReference type="CDD" id="cd08289">
    <property type="entry name" value="MDR_yhfp_like"/>
    <property type="match status" value="1"/>
</dbReference>
<dbReference type="Gene3D" id="3.90.180.10">
    <property type="entry name" value="Medium-chain alcohol dehydrogenases, catalytic domain"/>
    <property type="match status" value="1"/>
</dbReference>
<dbReference type="Gene3D" id="3.40.50.720">
    <property type="entry name" value="NAD(P)-binding Rossmann-like Domain"/>
    <property type="match status" value="1"/>
</dbReference>
<dbReference type="InterPro" id="IPR014188">
    <property type="entry name" value="Acrylyl-CoA_reductase_AcuI"/>
</dbReference>
<dbReference type="InterPro" id="IPR013149">
    <property type="entry name" value="ADH-like_C"/>
</dbReference>
<dbReference type="InterPro" id="IPR013154">
    <property type="entry name" value="ADH-like_N"/>
</dbReference>
<dbReference type="InterPro" id="IPR011032">
    <property type="entry name" value="GroES-like_sf"/>
</dbReference>
<dbReference type="InterPro" id="IPR036291">
    <property type="entry name" value="NAD(P)-bd_dom_sf"/>
</dbReference>
<dbReference type="InterPro" id="IPR020843">
    <property type="entry name" value="PKS_ER"/>
</dbReference>
<dbReference type="InterPro" id="IPR051397">
    <property type="entry name" value="Zn-ADH-like_protein"/>
</dbReference>
<dbReference type="NCBIfam" id="TIGR02823">
    <property type="entry name" value="oxido_YhdH"/>
    <property type="match status" value="1"/>
</dbReference>
<dbReference type="PANTHER" id="PTHR43677:SF1">
    <property type="entry name" value="ACRYLYL-COA REDUCTASE ACUI-RELATED"/>
    <property type="match status" value="1"/>
</dbReference>
<dbReference type="PANTHER" id="PTHR43677">
    <property type="entry name" value="SHORT-CHAIN DEHYDROGENASE/REDUCTASE"/>
    <property type="match status" value="1"/>
</dbReference>
<dbReference type="Pfam" id="PF08240">
    <property type="entry name" value="ADH_N"/>
    <property type="match status" value="1"/>
</dbReference>
<dbReference type="Pfam" id="PF00107">
    <property type="entry name" value="ADH_zinc_N"/>
    <property type="match status" value="1"/>
</dbReference>
<dbReference type="SMART" id="SM00829">
    <property type="entry name" value="PKS_ER"/>
    <property type="match status" value="1"/>
</dbReference>
<dbReference type="SUPFAM" id="SSF50129">
    <property type="entry name" value="GroES-like"/>
    <property type="match status" value="1"/>
</dbReference>
<dbReference type="SUPFAM" id="SSF51735">
    <property type="entry name" value="NAD(P)-binding Rossmann-fold domains"/>
    <property type="match status" value="1"/>
</dbReference>
<proteinExistence type="evidence at protein level"/>
<gene>
    <name type="primary">yhfP</name>
    <name type="ordered locus">BSU10320</name>
</gene>
<protein>
    <recommendedName>
        <fullName>Putative quinone oxidoreductase YhfP</fullName>
        <ecNumber>1.6.5.-</ecNumber>
    </recommendedName>
</protein>
<evidence type="ECO:0000250" key="1"/>
<evidence type="ECO:0000305" key="2"/>
<evidence type="ECO:0000305" key="3">
    <source ref="3"/>
</evidence>
<evidence type="ECO:0007829" key="4">
    <source>
        <dbReference type="PDB" id="1TT7"/>
    </source>
</evidence>
<evidence type="ECO:0007829" key="5">
    <source>
        <dbReference type="PDB" id="1Y9E"/>
    </source>
</evidence>
<comment type="subunit">
    <text evidence="3">Homodimer, or homotetramer.</text>
</comment>
<comment type="subcellular location">
    <subcellularLocation>
        <location evidence="2">Cytoplasm</location>
    </subcellularLocation>
</comment>
<comment type="similarity">
    <text evidence="2">Belongs to the zinc-containing alcohol dehydrogenase family. Quinone oxidoreductase subfamily.</text>
</comment>
<name>YHFP_BACSU</name>
<sequence>MSTLFQALQAEKNADDVSVHVKTISTEDLPKDGVLIKVAYSGINYKDGLAGKAGGNIVREYPLILGIDAAGTVVSSNDPRFAEGDEVIATSYELGVSRDGGLSEYASVPGDWLVPLPQNLSLKEAMVYGTAGFTAALSVHRLEQNGLSPEKGSVLVTGATGGVGGIAVSMLNKRGYDVVASTGNREAADYLKQLGASEVISREDVYDGTLKALSKQQWQGAVDPVGGKQLASLLSKIQYGGSVAVSGLTGGGEVPATVYPFILRGVSLLGIDSVYCPMDVRAAVWERMSSDLKPDQLLTIVDREVSLEETPGALKDILQNRIQGRVIVKL</sequence>
<feature type="chain" id="PRO_0000360861" description="Putative quinone oxidoreductase YhfP">
    <location>
        <begin position="1"/>
        <end position="330"/>
    </location>
</feature>
<feature type="binding site" evidence="1">
    <location>
        <position position="45"/>
    </location>
    <ligand>
        <name>NADP(+)</name>
        <dbReference type="ChEBI" id="CHEBI:58349"/>
    </ligand>
</feature>
<feature type="binding site" evidence="1">
    <location>
        <begin position="160"/>
        <end position="163"/>
    </location>
    <ligand>
        <name>NADP(+)</name>
        <dbReference type="ChEBI" id="CHEBI:58349"/>
    </ligand>
</feature>
<feature type="binding site" evidence="1">
    <location>
        <begin position="182"/>
        <end position="184"/>
    </location>
    <ligand>
        <name>NADP(+)</name>
        <dbReference type="ChEBI" id="CHEBI:58349"/>
    </ligand>
</feature>
<feature type="binding site" evidence="1">
    <location>
        <position position="202"/>
    </location>
    <ligand>
        <name>NADP(+)</name>
        <dbReference type="ChEBI" id="CHEBI:58349"/>
    </ligand>
</feature>
<feature type="binding site" evidence="1">
    <location>
        <position position="248"/>
    </location>
    <ligand>
        <name>NADP(+)</name>
        <dbReference type="ChEBI" id="CHEBI:58349"/>
    </ligand>
</feature>
<feature type="binding site" evidence="1">
    <location>
        <position position="262"/>
    </location>
    <ligand>
        <name>NADP(+)</name>
        <dbReference type="ChEBI" id="CHEBI:58349"/>
    </ligand>
</feature>
<feature type="binding site" evidence="1">
    <location>
        <position position="273"/>
    </location>
    <ligand>
        <name>NADP(+)</name>
        <dbReference type="ChEBI" id="CHEBI:58349"/>
    </ligand>
</feature>
<feature type="binding site" evidence="1">
    <location>
        <position position="320"/>
    </location>
    <ligand>
        <name>NADP(+)</name>
        <dbReference type="ChEBI" id="CHEBI:58349"/>
    </ligand>
</feature>
<feature type="strand" evidence="4">
    <location>
        <begin position="4"/>
        <end position="10"/>
    </location>
</feature>
<feature type="helix" evidence="4">
    <location>
        <begin position="13"/>
        <end position="15"/>
    </location>
</feature>
<feature type="strand" evidence="4">
    <location>
        <begin position="20"/>
        <end position="29"/>
    </location>
</feature>
<feature type="strand" evidence="4">
    <location>
        <begin position="31"/>
        <end position="38"/>
    </location>
</feature>
<feature type="strand" evidence="4">
    <location>
        <begin position="41"/>
        <end position="43"/>
    </location>
</feature>
<feature type="helix" evidence="4">
    <location>
        <begin position="45"/>
        <end position="50"/>
    </location>
</feature>
<feature type="strand" evidence="4">
    <location>
        <begin position="62"/>
        <end position="64"/>
    </location>
</feature>
<feature type="strand" evidence="4">
    <location>
        <begin position="67"/>
        <end position="75"/>
    </location>
</feature>
<feature type="strand" evidence="4">
    <location>
        <begin position="86"/>
        <end position="91"/>
    </location>
</feature>
<feature type="turn" evidence="4">
    <location>
        <begin position="95"/>
        <end position="97"/>
    </location>
</feature>
<feature type="strand" evidence="4">
    <location>
        <begin position="101"/>
        <end position="108"/>
    </location>
</feature>
<feature type="helix" evidence="4">
    <location>
        <begin position="110"/>
        <end position="112"/>
    </location>
</feature>
<feature type="strand" evidence="4">
    <location>
        <begin position="113"/>
        <end position="115"/>
    </location>
</feature>
<feature type="helix" evidence="4">
    <location>
        <begin position="122"/>
        <end position="144"/>
    </location>
</feature>
<feature type="helix" evidence="4">
    <location>
        <begin position="149"/>
        <end position="151"/>
    </location>
</feature>
<feature type="strand" evidence="4">
    <location>
        <begin position="154"/>
        <end position="158"/>
    </location>
</feature>
<feature type="helix" evidence="4">
    <location>
        <begin position="162"/>
        <end position="174"/>
    </location>
</feature>
<feature type="strand" evidence="4">
    <location>
        <begin position="178"/>
        <end position="186"/>
    </location>
</feature>
<feature type="helix" evidence="4">
    <location>
        <begin position="188"/>
        <end position="194"/>
    </location>
</feature>
<feature type="strand" evidence="4">
    <location>
        <begin position="197"/>
        <end position="201"/>
    </location>
</feature>
<feature type="helix" evidence="4">
    <location>
        <begin position="202"/>
        <end position="205"/>
    </location>
</feature>
<feature type="strand" evidence="4">
    <location>
        <begin position="218"/>
        <end position="224"/>
    </location>
</feature>
<feature type="helix" evidence="4">
    <location>
        <begin position="228"/>
        <end position="234"/>
    </location>
</feature>
<feature type="strand" evidence="4">
    <location>
        <begin position="237"/>
        <end position="245"/>
    </location>
</feature>
<feature type="strand" evidence="4">
    <location>
        <begin position="254"/>
        <end position="256"/>
    </location>
</feature>
<feature type="helix" evidence="4">
    <location>
        <begin position="259"/>
        <end position="262"/>
    </location>
</feature>
<feature type="strand" evidence="4">
    <location>
        <begin position="267"/>
        <end position="270"/>
    </location>
</feature>
<feature type="strand" evidence="4">
    <location>
        <begin position="273"/>
        <end position="275"/>
    </location>
</feature>
<feature type="helix" evidence="4">
    <location>
        <begin position="278"/>
        <end position="287"/>
    </location>
</feature>
<feature type="turn" evidence="4">
    <location>
        <begin position="288"/>
        <end position="291"/>
    </location>
</feature>
<feature type="strand" evidence="4">
    <location>
        <begin position="300"/>
        <end position="305"/>
    </location>
</feature>
<feature type="helix" evidence="5">
    <location>
        <begin position="307"/>
        <end position="309"/>
    </location>
</feature>
<feature type="helix" evidence="4">
    <location>
        <begin position="310"/>
        <end position="316"/>
    </location>
</feature>
<feature type="turn" evidence="4">
    <location>
        <begin position="317"/>
        <end position="320"/>
    </location>
</feature>
<feature type="strand" evidence="4">
    <location>
        <begin position="323"/>
        <end position="328"/>
    </location>
</feature>
<keyword id="KW-0002">3D-structure</keyword>
<keyword id="KW-0963">Cytoplasm</keyword>
<keyword id="KW-0521">NADP</keyword>
<keyword id="KW-0560">Oxidoreductase</keyword>
<keyword id="KW-1185">Reference proteome</keyword>
<accession>O07615</accession>
<accession>Q796T7</accession>